<dbReference type="EMBL" id="AE005674">
    <property type="protein sequence ID" value="AAN41697.1"/>
    <property type="status" value="ALT_INIT"/>
    <property type="molecule type" value="Genomic_DNA"/>
</dbReference>
<dbReference type="EMBL" id="AE014073">
    <property type="protein sequence ID" value="AAP15578.1"/>
    <property type="status" value="ALT_INIT"/>
    <property type="molecule type" value="Genomic_DNA"/>
</dbReference>
<dbReference type="RefSeq" id="WP_000333125.1">
    <property type="nucleotide sequence ID" value="NZ_WPGW01000005.1"/>
</dbReference>
<dbReference type="SMR" id="P0AE59"/>
<dbReference type="STRING" id="198214.SF0031"/>
<dbReference type="PaxDb" id="198214-SF0031"/>
<dbReference type="KEGG" id="sfx:S0033"/>
<dbReference type="PATRIC" id="fig|623.156.peg.3062"/>
<dbReference type="HOGENOM" id="CLU_144191_0_0_6"/>
<dbReference type="Proteomes" id="UP000001006">
    <property type="component" value="Chromosome"/>
</dbReference>
<dbReference type="Proteomes" id="UP000002673">
    <property type="component" value="Chromosome"/>
</dbReference>
<dbReference type="GO" id="GO:0006351">
    <property type="term" value="P:DNA-templated transcription"/>
    <property type="evidence" value="ECO:0007669"/>
    <property type="project" value="InterPro"/>
</dbReference>
<dbReference type="FunFam" id="1.10.10.10:FF:000309">
    <property type="entry name" value="Transcriptional activatory protein CaiF"/>
    <property type="match status" value="1"/>
</dbReference>
<dbReference type="Gene3D" id="1.10.10.10">
    <property type="entry name" value="Winged helix-like DNA-binding domain superfamily/Winged helix DNA-binding domain"/>
    <property type="match status" value="1"/>
</dbReference>
<dbReference type="InterPro" id="IPR020357">
    <property type="entry name" value="Tscrpt_reg_CaiF/GrlA"/>
</dbReference>
<dbReference type="InterPro" id="IPR036388">
    <property type="entry name" value="WH-like_DNA-bd_sf"/>
</dbReference>
<dbReference type="NCBIfam" id="NF008549">
    <property type="entry name" value="PRK11476.1"/>
    <property type="match status" value="1"/>
</dbReference>
<dbReference type="Pfam" id="PF07180">
    <property type="entry name" value="CaiF_GrlA"/>
    <property type="match status" value="1"/>
</dbReference>
<accession>P0AE59</accession>
<accession>P75622</accession>
<accession>Q47081</accession>
<evidence type="ECO:0000250" key="1"/>
<evidence type="ECO:0000305" key="2"/>
<protein>
    <recommendedName>
        <fullName>Transcriptional activatory protein CaiF</fullName>
    </recommendedName>
</protein>
<comment type="function">
    <text evidence="1">Potential transcriptional activator of carnitine metabolism.</text>
</comment>
<comment type="sequence caution" evidence="2">
    <conflict type="erroneous initiation">
        <sequence resource="EMBL-CDS" id="AAN41697"/>
    </conflict>
</comment>
<comment type="sequence caution" evidence="2">
    <conflict type="erroneous initiation">
        <sequence resource="EMBL-CDS" id="AAP15578"/>
    </conflict>
</comment>
<name>CAIF_SHIFL</name>
<keyword id="KW-0010">Activator</keyword>
<keyword id="KW-1185">Reference proteome</keyword>
<keyword id="KW-0804">Transcription</keyword>
<keyword id="KW-0805">Transcription regulation</keyword>
<feature type="chain" id="PRO_0000089285" description="Transcriptional activatory protein CaiF">
    <location>
        <begin position="1"/>
        <end position="131"/>
    </location>
</feature>
<reference key="1">
    <citation type="journal article" date="2002" name="Nucleic Acids Res.">
        <title>Genome sequence of Shigella flexneri 2a: insights into pathogenicity through comparison with genomes of Escherichia coli K12 and O157.</title>
        <authorList>
            <person name="Jin Q."/>
            <person name="Yuan Z."/>
            <person name="Xu J."/>
            <person name="Wang Y."/>
            <person name="Shen Y."/>
            <person name="Lu W."/>
            <person name="Wang J."/>
            <person name="Liu H."/>
            <person name="Yang J."/>
            <person name="Yang F."/>
            <person name="Zhang X."/>
            <person name="Zhang J."/>
            <person name="Yang G."/>
            <person name="Wu H."/>
            <person name="Qu D."/>
            <person name="Dong J."/>
            <person name="Sun L."/>
            <person name="Xue Y."/>
            <person name="Zhao A."/>
            <person name="Gao Y."/>
            <person name="Zhu J."/>
            <person name="Kan B."/>
            <person name="Ding K."/>
            <person name="Chen S."/>
            <person name="Cheng H."/>
            <person name="Yao Z."/>
            <person name="He B."/>
            <person name="Chen R."/>
            <person name="Ma D."/>
            <person name="Qiang B."/>
            <person name="Wen Y."/>
            <person name="Hou Y."/>
            <person name="Yu J."/>
        </authorList>
    </citation>
    <scope>NUCLEOTIDE SEQUENCE [LARGE SCALE GENOMIC DNA]</scope>
    <source>
        <strain>301 / Serotype 2a</strain>
    </source>
</reference>
<reference key="2">
    <citation type="journal article" date="2003" name="Infect. Immun.">
        <title>Complete genome sequence and comparative genomics of Shigella flexneri serotype 2a strain 2457T.</title>
        <authorList>
            <person name="Wei J."/>
            <person name="Goldberg M.B."/>
            <person name="Burland V."/>
            <person name="Venkatesan M.M."/>
            <person name="Deng W."/>
            <person name="Fournier G."/>
            <person name="Mayhew G.F."/>
            <person name="Plunkett G. III"/>
            <person name="Rose D.J."/>
            <person name="Darling A."/>
            <person name="Mau B."/>
            <person name="Perna N.T."/>
            <person name="Payne S.M."/>
            <person name="Runyen-Janecky L.J."/>
            <person name="Zhou S."/>
            <person name="Schwartz D.C."/>
            <person name="Blattner F.R."/>
        </authorList>
    </citation>
    <scope>NUCLEOTIDE SEQUENCE [LARGE SCALE GENOMIC DNA]</scope>
    <source>
        <strain>ATCC 700930 / 2457T / Serotype 2a</strain>
    </source>
</reference>
<gene>
    <name type="primary">caiF</name>
    <name type="ordered locus">SF0031</name>
    <name type="ordered locus">S0033</name>
</gene>
<sequence>MCEGYVEKPLYLLIAEWMMAENRWVIAREISIHFDIEHSKAVNTLTYILSEVTEISCEVKMIPNKLEGRGCQCQRLVKVVDIDEQIYARLRNNSREKLVGVRKTPRIPAVPLTELNREQKWQMMLSKSMRR</sequence>
<proteinExistence type="inferred from homology"/>
<organism>
    <name type="scientific">Shigella flexneri</name>
    <dbReference type="NCBI Taxonomy" id="623"/>
    <lineage>
        <taxon>Bacteria</taxon>
        <taxon>Pseudomonadati</taxon>
        <taxon>Pseudomonadota</taxon>
        <taxon>Gammaproteobacteria</taxon>
        <taxon>Enterobacterales</taxon>
        <taxon>Enterobacteriaceae</taxon>
        <taxon>Shigella</taxon>
    </lineage>
</organism>